<proteinExistence type="inferred from homology"/>
<accession>A8GS98</accession>
<reference key="1">
    <citation type="submission" date="2007-09" db="EMBL/GenBank/DDBJ databases">
        <title>Complete genome sequence of Rickettsia rickettsii.</title>
        <authorList>
            <person name="Madan A."/>
            <person name="Fahey J."/>
            <person name="Helton E."/>
            <person name="Ketteman M."/>
            <person name="Madan A."/>
            <person name="Rodrigues S."/>
            <person name="Sanchez A."/>
            <person name="Dasch G."/>
            <person name="Eremeeva M."/>
        </authorList>
    </citation>
    <scope>NUCLEOTIDE SEQUENCE [LARGE SCALE GENOMIC DNA]</scope>
    <source>
        <strain>Sheila Smith</strain>
    </source>
</reference>
<sequence length="345" mass="38754">MSNYWLNIYKPRGISSAQLVSIVKKILGKTKIGHAGTLDVEAEGILPFAVGEATKLIRLLIDARKTYIFTVKFGMQTNSGDCAGKVIATKDCVPSQEEAYAVCSKFIGSVTQIPPAFSALKVNGVRAYKLAREEKKVELKPRNITIYDLKCLNFDEKNATATYYTECSKGTYIRTLAEDLALSLQSLGFVIELRRTQVGIFKEENAIRIKSPDEITKNALEAKSIKIEAILDDILVLDATDSQAQQIKYGQKCLFNYEKDFRHLAKFAYREEFKGNTERSTTAYTLVREDASTGLTYKLPLEVEFGKMSIDLLWVRYKGTLLAIGSLNKSCFNSLRVFNLTQDFF</sequence>
<organism>
    <name type="scientific">Rickettsia rickettsii (strain Sheila Smith)</name>
    <dbReference type="NCBI Taxonomy" id="392021"/>
    <lineage>
        <taxon>Bacteria</taxon>
        <taxon>Pseudomonadati</taxon>
        <taxon>Pseudomonadota</taxon>
        <taxon>Alphaproteobacteria</taxon>
        <taxon>Rickettsiales</taxon>
        <taxon>Rickettsiaceae</taxon>
        <taxon>Rickettsieae</taxon>
        <taxon>Rickettsia</taxon>
        <taxon>spotted fever group</taxon>
    </lineage>
</organism>
<name>TRUB_RICRS</name>
<keyword id="KW-0413">Isomerase</keyword>
<keyword id="KW-0819">tRNA processing</keyword>
<dbReference type="EC" id="5.4.99.25" evidence="1"/>
<dbReference type="EMBL" id="CP000848">
    <property type="protein sequence ID" value="ABV76273.1"/>
    <property type="molecule type" value="Genomic_DNA"/>
</dbReference>
<dbReference type="RefSeq" id="WP_012150854.1">
    <property type="nucleotide sequence ID" value="NZ_CP121767.1"/>
</dbReference>
<dbReference type="SMR" id="A8GS98"/>
<dbReference type="GeneID" id="79937402"/>
<dbReference type="KEGG" id="rri:A1G_03780"/>
<dbReference type="HOGENOM" id="CLU_032087_0_3_5"/>
<dbReference type="Proteomes" id="UP000006832">
    <property type="component" value="Chromosome"/>
</dbReference>
<dbReference type="GO" id="GO:0003723">
    <property type="term" value="F:RNA binding"/>
    <property type="evidence" value="ECO:0007669"/>
    <property type="project" value="InterPro"/>
</dbReference>
<dbReference type="GO" id="GO:0160148">
    <property type="term" value="F:tRNA pseudouridine(55) synthase activity"/>
    <property type="evidence" value="ECO:0007669"/>
    <property type="project" value="UniProtKB-EC"/>
</dbReference>
<dbReference type="GO" id="GO:1990481">
    <property type="term" value="P:mRNA pseudouridine synthesis"/>
    <property type="evidence" value="ECO:0007669"/>
    <property type="project" value="TreeGrafter"/>
</dbReference>
<dbReference type="GO" id="GO:0031119">
    <property type="term" value="P:tRNA pseudouridine synthesis"/>
    <property type="evidence" value="ECO:0007669"/>
    <property type="project" value="UniProtKB-UniRule"/>
</dbReference>
<dbReference type="CDD" id="cd02573">
    <property type="entry name" value="PseudoU_synth_EcTruB"/>
    <property type="match status" value="1"/>
</dbReference>
<dbReference type="Gene3D" id="3.30.2350.10">
    <property type="entry name" value="Pseudouridine synthase"/>
    <property type="match status" value="1"/>
</dbReference>
<dbReference type="HAMAP" id="MF_01080">
    <property type="entry name" value="TruB_bact"/>
    <property type="match status" value="1"/>
</dbReference>
<dbReference type="InterPro" id="IPR020103">
    <property type="entry name" value="PsdUridine_synth_cat_dom_sf"/>
</dbReference>
<dbReference type="InterPro" id="IPR002501">
    <property type="entry name" value="PsdUridine_synth_N"/>
</dbReference>
<dbReference type="InterPro" id="IPR005728">
    <property type="entry name" value="RPE1"/>
</dbReference>
<dbReference type="InterPro" id="IPR014780">
    <property type="entry name" value="tRNA_psdUridine_synth_TruB"/>
</dbReference>
<dbReference type="InterPro" id="IPR032819">
    <property type="entry name" value="TruB_C"/>
</dbReference>
<dbReference type="NCBIfam" id="TIGR01045">
    <property type="entry name" value="RPE1"/>
    <property type="match status" value="1"/>
</dbReference>
<dbReference type="NCBIfam" id="TIGR00431">
    <property type="entry name" value="TruB"/>
    <property type="match status" value="1"/>
</dbReference>
<dbReference type="PANTHER" id="PTHR13767:SF2">
    <property type="entry name" value="PSEUDOURIDYLATE SYNTHASE TRUB1"/>
    <property type="match status" value="1"/>
</dbReference>
<dbReference type="PANTHER" id="PTHR13767">
    <property type="entry name" value="TRNA-PSEUDOURIDINE SYNTHASE"/>
    <property type="match status" value="1"/>
</dbReference>
<dbReference type="Pfam" id="PF16198">
    <property type="entry name" value="TruB_C_2"/>
    <property type="match status" value="1"/>
</dbReference>
<dbReference type="Pfam" id="PF01509">
    <property type="entry name" value="TruB_N"/>
    <property type="match status" value="1"/>
</dbReference>
<dbReference type="SUPFAM" id="SSF55120">
    <property type="entry name" value="Pseudouridine synthase"/>
    <property type="match status" value="1"/>
</dbReference>
<comment type="function">
    <text evidence="1">Responsible for synthesis of pseudouridine from uracil-55 in the psi GC loop of transfer RNAs.</text>
</comment>
<comment type="catalytic activity">
    <reaction evidence="1">
        <text>uridine(55) in tRNA = pseudouridine(55) in tRNA</text>
        <dbReference type="Rhea" id="RHEA:42532"/>
        <dbReference type="Rhea" id="RHEA-COMP:10101"/>
        <dbReference type="Rhea" id="RHEA-COMP:10102"/>
        <dbReference type="ChEBI" id="CHEBI:65314"/>
        <dbReference type="ChEBI" id="CHEBI:65315"/>
        <dbReference type="EC" id="5.4.99.25"/>
    </reaction>
</comment>
<comment type="similarity">
    <text evidence="1">Belongs to the pseudouridine synthase TruB family. Type 1 subfamily.</text>
</comment>
<protein>
    <recommendedName>
        <fullName evidence="1">tRNA pseudouridine synthase B</fullName>
        <ecNumber evidence="1">5.4.99.25</ecNumber>
    </recommendedName>
    <alternativeName>
        <fullName evidence="1">tRNA pseudouridine(55) synthase</fullName>
        <shortName evidence="1">Psi55 synthase</shortName>
    </alternativeName>
    <alternativeName>
        <fullName evidence="1">tRNA pseudouridylate synthase</fullName>
    </alternativeName>
    <alternativeName>
        <fullName evidence="1">tRNA-uridine isomerase</fullName>
    </alternativeName>
</protein>
<gene>
    <name evidence="1" type="primary">truB</name>
    <name type="ordered locus">A1G_03780</name>
</gene>
<feature type="chain" id="PRO_1000084663" description="tRNA pseudouridine synthase B">
    <location>
        <begin position="1"/>
        <end position="345"/>
    </location>
</feature>
<feature type="active site" description="Nucleophile" evidence="1">
    <location>
        <position position="39"/>
    </location>
</feature>
<evidence type="ECO:0000255" key="1">
    <source>
        <dbReference type="HAMAP-Rule" id="MF_01080"/>
    </source>
</evidence>